<sequence>MFLNSLPTNFAALEVGQHLYWQIGNIRLHGQVFLTSWILLGALLVFISVGTKKMENDPKGLQNLLEFLWDYIRDLSRTQIGEKVYRDWMPFIGTLFLFVFVSNWGGALIPWRLIKLPSGELGAPTADINTTIALALLVSLSYFYAGLSNKGWRYFEYYVHPTPIMLPFKILEDFTKPLSLSFRLFGNILADELVVGVLVFLVPLVLPIPVMFLGLFTSAIQALIFATLAAYYIGEAVEEHH</sequence>
<dbReference type="EMBL" id="BX548174">
    <property type="protein sequence ID" value="CAE19915.1"/>
    <property type="molecule type" value="Genomic_DNA"/>
</dbReference>
<dbReference type="RefSeq" id="WP_011133084.1">
    <property type="nucleotide sequence ID" value="NC_005072.1"/>
</dbReference>
<dbReference type="SMR" id="Q7V032"/>
<dbReference type="STRING" id="59919.PMM1456"/>
<dbReference type="KEGG" id="pmm:PMM1456"/>
<dbReference type="eggNOG" id="COG0356">
    <property type="taxonomic scope" value="Bacteria"/>
</dbReference>
<dbReference type="HOGENOM" id="CLU_041018_2_4_3"/>
<dbReference type="OrthoDB" id="9789241at2"/>
<dbReference type="Proteomes" id="UP000001026">
    <property type="component" value="Chromosome"/>
</dbReference>
<dbReference type="GO" id="GO:0031676">
    <property type="term" value="C:plasma membrane-derived thylakoid membrane"/>
    <property type="evidence" value="ECO:0007669"/>
    <property type="project" value="UniProtKB-SubCell"/>
</dbReference>
<dbReference type="GO" id="GO:0045259">
    <property type="term" value="C:proton-transporting ATP synthase complex"/>
    <property type="evidence" value="ECO:0007669"/>
    <property type="project" value="UniProtKB-KW"/>
</dbReference>
<dbReference type="GO" id="GO:0046933">
    <property type="term" value="F:proton-transporting ATP synthase activity, rotational mechanism"/>
    <property type="evidence" value="ECO:0007669"/>
    <property type="project" value="UniProtKB-UniRule"/>
</dbReference>
<dbReference type="CDD" id="cd00310">
    <property type="entry name" value="ATP-synt_Fo_a_6"/>
    <property type="match status" value="1"/>
</dbReference>
<dbReference type="FunFam" id="1.20.120.220:FF:000001">
    <property type="entry name" value="ATP synthase subunit a, chloroplastic"/>
    <property type="match status" value="1"/>
</dbReference>
<dbReference type="Gene3D" id="1.20.120.220">
    <property type="entry name" value="ATP synthase, F0 complex, subunit A"/>
    <property type="match status" value="1"/>
</dbReference>
<dbReference type="HAMAP" id="MF_01393">
    <property type="entry name" value="ATP_synth_a_bact"/>
    <property type="match status" value="1"/>
</dbReference>
<dbReference type="InterPro" id="IPR045082">
    <property type="entry name" value="ATP_syn_F0_a_bact/chloroplast"/>
</dbReference>
<dbReference type="InterPro" id="IPR000568">
    <property type="entry name" value="ATP_synth_F0_asu"/>
</dbReference>
<dbReference type="InterPro" id="IPR023011">
    <property type="entry name" value="ATP_synth_F0_asu_AS"/>
</dbReference>
<dbReference type="InterPro" id="IPR035908">
    <property type="entry name" value="F0_ATP_A_sf"/>
</dbReference>
<dbReference type="NCBIfam" id="TIGR01131">
    <property type="entry name" value="ATP_synt_6_or_A"/>
    <property type="match status" value="1"/>
</dbReference>
<dbReference type="PANTHER" id="PTHR42823">
    <property type="entry name" value="ATP SYNTHASE SUBUNIT A, CHLOROPLASTIC"/>
    <property type="match status" value="1"/>
</dbReference>
<dbReference type="PANTHER" id="PTHR42823:SF3">
    <property type="entry name" value="ATP SYNTHASE SUBUNIT A, CHLOROPLASTIC"/>
    <property type="match status" value="1"/>
</dbReference>
<dbReference type="Pfam" id="PF00119">
    <property type="entry name" value="ATP-synt_A"/>
    <property type="match status" value="1"/>
</dbReference>
<dbReference type="PRINTS" id="PR00123">
    <property type="entry name" value="ATPASEA"/>
</dbReference>
<dbReference type="SUPFAM" id="SSF81336">
    <property type="entry name" value="F1F0 ATP synthase subunit A"/>
    <property type="match status" value="1"/>
</dbReference>
<dbReference type="PROSITE" id="PS00449">
    <property type="entry name" value="ATPASE_A"/>
    <property type="match status" value="1"/>
</dbReference>
<feature type="chain" id="PRO_0000362385" description="ATP synthase subunit a">
    <location>
        <begin position="1"/>
        <end position="241"/>
    </location>
</feature>
<feature type="transmembrane region" description="Helical" evidence="1">
    <location>
        <begin position="30"/>
        <end position="50"/>
    </location>
</feature>
<feature type="transmembrane region" description="Helical" evidence="1">
    <location>
        <begin position="91"/>
        <end position="111"/>
    </location>
</feature>
<feature type="transmembrane region" description="Helical" evidence="1">
    <location>
        <begin position="128"/>
        <end position="148"/>
    </location>
</feature>
<feature type="transmembrane region" description="Helical" evidence="1">
    <location>
        <begin position="193"/>
        <end position="213"/>
    </location>
</feature>
<feature type="transmembrane region" description="Helical" evidence="1">
    <location>
        <begin position="214"/>
        <end position="234"/>
    </location>
</feature>
<name>ATP6_PROMP</name>
<comment type="function">
    <text evidence="1">Key component of the proton channel; it plays a direct role in the translocation of protons across the membrane.</text>
</comment>
<comment type="subunit">
    <text evidence="1">F-type ATPases have 2 components, CF(1) - the catalytic core - and CF(0) - the membrane proton channel. CF(1) has five subunits: alpha(3), beta(3), gamma(1), delta(1), epsilon(1). CF(0) has four main subunits: a, b, b' and c.</text>
</comment>
<comment type="subcellular location">
    <subcellularLocation>
        <location evidence="1">Cellular thylakoid membrane</location>
        <topology evidence="1">Multi-pass membrane protein</topology>
    </subcellularLocation>
</comment>
<comment type="similarity">
    <text evidence="1">Belongs to the ATPase A chain family.</text>
</comment>
<keyword id="KW-0066">ATP synthesis</keyword>
<keyword id="KW-0138">CF(0)</keyword>
<keyword id="KW-0375">Hydrogen ion transport</keyword>
<keyword id="KW-0406">Ion transport</keyword>
<keyword id="KW-0472">Membrane</keyword>
<keyword id="KW-0793">Thylakoid</keyword>
<keyword id="KW-0812">Transmembrane</keyword>
<keyword id="KW-1133">Transmembrane helix</keyword>
<keyword id="KW-0813">Transport</keyword>
<accession>Q7V032</accession>
<organism>
    <name type="scientific">Prochlorococcus marinus subsp. pastoris (strain CCMP1986 / NIES-2087 / MED4)</name>
    <dbReference type="NCBI Taxonomy" id="59919"/>
    <lineage>
        <taxon>Bacteria</taxon>
        <taxon>Bacillati</taxon>
        <taxon>Cyanobacteriota</taxon>
        <taxon>Cyanophyceae</taxon>
        <taxon>Synechococcales</taxon>
        <taxon>Prochlorococcaceae</taxon>
        <taxon>Prochlorococcus</taxon>
    </lineage>
</organism>
<gene>
    <name evidence="1" type="primary">atpB</name>
    <name evidence="1" type="synonym">atpI</name>
    <name type="ordered locus">PMM1456</name>
</gene>
<protein>
    <recommendedName>
        <fullName evidence="1">ATP synthase subunit a</fullName>
    </recommendedName>
    <alternativeName>
        <fullName evidence="1">ATP synthase F0 sector subunit a</fullName>
    </alternativeName>
    <alternativeName>
        <fullName evidence="1">F-ATPase subunit 6</fullName>
    </alternativeName>
</protein>
<evidence type="ECO:0000255" key="1">
    <source>
        <dbReference type="HAMAP-Rule" id="MF_01393"/>
    </source>
</evidence>
<reference key="1">
    <citation type="journal article" date="2003" name="Nature">
        <title>Genome divergence in two Prochlorococcus ecotypes reflects oceanic niche differentiation.</title>
        <authorList>
            <person name="Rocap G."/>
            <person name="Larimer F.W."/>
            <person name="Lamerdin J.E."/>
            <person name="Malfatti S."/>
            <person name="Chain P."/>
            <person name="Ahlgren N.A."/>
            <person name="Arellano A."/>
            <person name="Coleman M."/>
            <person name="Hauser L."/>
            <person name="Hess W.R."/>
            <person name="Johnson Z.I."/>
            <person name="Land M.L."/>
            <person name="Lindell D."/>
            <person name="Post A.F."/>
            <person name="Regala W."/>
            <person name="Shah M."/>
            <person name="Shaw S.L."/>
            <person name="Steglich C."/>
            <person name="Sullivan M.B."/>
            <person name="Ting C.S."/>
            <person name="Tolonen A."/>
            <person name="Webb E.A."/>
            <person name="Zinser E.R."/>
            <person name="Chisholm S.W."/>
        </authorList>
    </citation>
    <scope>NUCLEOTIDE SEQUENCE [LARGE SCALE GENOMIC DNA]</scope>
    <source>
        <strain>CCMP1986 / NIES-2087 / MED4</strain>
    </source>
</reference>
<proteinExistence type="inferred from homology"/>